<gene>
    <name evidence="1" type="primary">hisS</name>
    <name type="ordered locus">TGRD_537</name>
</gene>
<feature type="chain" id="PRO_1000199163" description="Histidine--tRNA ligase">
    <location>
        <begin position="1"/>
        <end position="414"/>
    </location>
</feature>
<protein>
    <recommendedName>
        <fullName evidence="1">Histidine--tRNA ligase</fullName>
        <ecNumber evidence="1">6.1.1.21</ecNumber>
    </recommendedName>
    <alternativeName>
        <fullName evidence="1">Histidyl-tRNA synthetase</fullName>
        <shortName evidence="1">HisRS</shortName>
    </alternativeName>
</protein>
<evidence type="ECO:0000255" key="1">
    <source>
        <dbReference type="HAMAP-Rule" id="MF_00127"/>
    </source>
</evidence>
<dbReference type="EC" id="6.1.1.21" evidence="1"/>
<dbReference type="EMBL" id="AP009510">
    <property type="protein sequence ID" value="BAG14020.1"/>
    <property type="molecule type" value="Genomic_DNA"/>
</dbReference>
<dbReference type="RefSeq" id="WP_015423545.1">
    <property type="nucleotide sequence ID" value="NC_020419.1"/>
</dbReference>
<dbReference type="SMR" id="B1H0I8"/>
<dbReference type="STRING" id="471821.TGRD_537"/>
<dbReference type="KEGG" id="rsd:TGRD_537"/>
<dbReference type="PATRIC" id="fig|471821.5.peg.874"/>
<dbReference type="HOGENOM" id="CLU_025113_1_1_0"/>
<dbReference type="Proteomes" id="UP000001691">
    <property type="component" value="Chromosome"/>
</dbReference>
<dbReference type="GO" id="GO:0005737">
    <property type="term" value="C:cytoplasm"/>
    <property type="evidence" value="ECO:0007669"/>
    <property type="project" value="UniProtKB-SubCell"/>
</dbReference>
<dbReference type="GO" id="GO:0005524">
    <property type="term" value="F:ATP binding"/>
    <property type="evidence" value="ECO:0007669"/>
    <property type="project" value="UniProtKB-UniRule"/>
</dbReference>
<dbReference type="GO" id="GO:0004821">
    <property type="term" value="F:histidine-tRNA ligase activity"/>
    <property type="evidence" value="ECO:0007669"/>
    <property type="project" value="UniProtKB-UniRule"/>
</dbReference>
<dbReference type="GO" id="GO:0006427">
    <property type="term" value="P:histidyl-tRNA aminoacylation"/>
    <property type="evidence" value="ECO:0007669"/>
    <property type="project" value="UniProtKB-UniRule"/>
</dbReference>
<dbReference type="CDD" id="cd00773">
    <property type="entry name" value="HisRS-like_core"/>
    <property type="match status" value="1"/>
</dbReference>
<dbReference type="Gene3D" id="3.40.50.800">
    <property type="entry name" value="Anticodon-binding domain"/>
    <property type="match status" value="1"/>
</dbReference>
<dbReference type="Gene3D" id="3.30.930.10">
    <property type="entry name" value="Bira Bifunctional Protein, Domain 2"/>
    <property type="match status" value="1"/>
</dbReference>
<dbReference type="HAMAP" id="MF_00127">
    <property type="entry name" value="His_tRNA_synth"/>
    <property type="match status" value="1"/>
</dbReference>
<dbReference type="InterPro" id="IPR006195">
    <property type="entry name" value="aa-tRNA-synth_II"/>
</dbReference>
<dbReference type="InterPro" id="IPR045864">
    <property type="entry name" value="aa-tRNA-synth_II/BPL/LPL"/>
</dbReference>
<dbReference type="InterPro" id="IPR036621">
    <property type="entry name" value="Anticodon-bd_dom_sf"/>
</dbReference>
<dbReference type="InterPro" id="IPR015807">
    <property type="entry name" value="His-tRNA-ligase"/>
</dbReference>
<dbReference type="InterPro" id="IPR041715">
    <property type="entry name" value="HisRS-like_core"/>
</dbReference>
<dbReference type="InterPro" id="IPR004516">
    <property type="entry name" value="HisRS/HisZ"/>
</dbReference>
<dbReference type="NCBIfam" id="TIGR00442">
    <property type="entry name" value="hisS"/>
    <property type="match status" value="1"/>
</dbReference>
<dbReference type="PANTHER" id="PTHR43707:SF1">
    <property type="entry name" value="HISTIDINE--TRNA LIGASE, MITOCHONDRIAL-RELATED"/>
    <property type="match status" value="1"/>
</dbReference>
<dbReference type="PANTHER" id="PTHR43707">
    <property type="entry name" value="HISTIDYL-TRNA SYNTHETASE"/>
    <property type="match status" value="1"/>
</dbReference>
<dbReference type="Pfam" id="PF13393">
    <property type="entry name" value="tRNA-synt_His"/>
    <property type="match status" value="1"/>
</dbReference>
<dbReference type="PIRSF" id="PIRSF001549">
    <property type="entry name" value="His-tRNA_synth"/>
    <property type="match status" value="1"/>
</dbReference>
<dbReference type="SUPFAM" id="SSF52954">
    <property type="entry name" value="Class II aaRS ABD-related"/>
    <property type="match status" value="1"/>
</dbReference>
<dbReference type="SUPFAM" id="SSF55681">
    <property type="entry name" value="Class II aaRS and biotin synthetases"/>
    <property type="match status" value="1"/>
</dbReference>
<dbReference type="PROSITE" id="PS50862">
    <property type="entry name" value="AA_TRNA_LIGASE_II"/>
    <property type="match status" value="1"/>
</dbReference>
<reference key="1">
    <citation type="journal article" date="2008" name="Proc. Natl. Acad. Sci. U.S.A.">
        <title>Complete genome of the uncultured termite group 1 bacteria in a single host protist cell.</title>
        <authorList>
            <person name="Hongoh Y."/>
            <person name="Sharma V.K."/>
            <person name="Prakash T."/>
            <person name="Noda S."/>
            <person name="Taylor T.D."/>
            <person name="Kudo T."/>
            <person name="Sakaki Y."/>
            <person name="Toyoda A."/>
            <person name="Hattori M."/>
            <person name="Ohkuma M."/>
        </authorList>
    </citation>
    <scope>NUCLEOTIDE SEQUENCE [LARGE SCALE GENOMIC DNA]</scope>
</reference>
<accession>B1H0I8</accession>
<organism>
    <name type="scientific">Endomicrobium trichonymphae</name>
    <dbReference type="NCBI Taxonomy" id="1408204"/>
    <lineage>
        <taxon>Bacteria</taxon>
        <taxon>Pseudomonadati</taxon>
        <taxon>Elusimicrobiota</taxon>
        <taxon>Endomicrobiia</taxon>
        <taxon>Endomicrobiales</taxon>
        <taxon>Endomicrobiaceae</taxon>
        <taxon>Candidatus Endomicrobiellum</taxon>
    </lineage>
</organism>
<sequence length="414" mass="46907">MNYKAPRGTHDIFGINASGMSWLEQKAKVIFKRHGFEEVRTPVFEDAALFMRSIGQTTDIVEKEMYIFEDRKKRKLALRPEGTASLVRAFIEHRMDVSMPAGRFFYMGEMFRYERPQAGRYRQFHQIGAEFFGSSSPAADAEIIILAQHLLSSVGINEMNIYINSLGCEKCRPFFRETLVKYLGSVRDLCEDCLRRLEKNPLRILDCKTDSNKFTAVPRMSDYLCNCCKDNFSLTQSLLKSVGYNYTVDERLVRGLDYYTKTVFEIRSDAVGSQCALAAGGRYDNLVGELGGQDTPAVGFALGSERVLLAVQKTGFFGSFQESEKIFIAVADQELFSEAFSFAVKAMRNGLKGNKNISVFGPINGKSLTSQLKFADKIKAVKTIVFARTEFEYGKFLMKNMKDKTQTEFLISEF</sequence>
<proteinExistence type="inferred from homology"/>
<name>SYH_ENDTX</name>
<comment type="catalytic activity">
    <reaction evidence="1">
        <text>tRNA(His) + L-histidine + ATP = L-histidyl-tRNA(His) + AMP + diphosphate + H(+)</text>
        <dbReference type="Rhea" id="RHEA:17313"/>
        <dbReference type="Rhea" id="RHEA-COMP:9665"/>
        <dbReference type="Rhea" id="RHEA-COMP:9689"/>
        <dbReference type="ChEBI" id="CHEBI:15378"/>
        <dbReference type="ChEBI" id="CHEBI:30616"/>
        <dbReference type="ChEBI" id="CHEBI:33019"/>
        <dbReference type="ChEBI" id="CHEBI:57595"/>
        <dbReference type="ChEBI" id="CHEBI:78442"/>
        <dbReference type="ChEBI" id="CHEBI:78527"/>
        <dbReference type="ChEBI" id="CHEBI:456215"/>
        <dbReference type="EC" id="6.1.1.21"/>
    </reaction>
</comment>
<comment type="subunit">
    <text evidence="1">Homodimer.</text>
</comment>
<comment type="subcellular location">
    <subcellularLocation>
        <location evidence="1">Cytoplasm</location>
    </subcellularLocation>
</comment>
<comment type="similarity">
    <text evidence="1">Belongs to the class-II aminoacyl-tRNA synthetase family.</text>
</comment>
<keyword id="KW-0030">Aminoacyl-tRNA synthetase</keyword>
<keyword id="KW-0067">ATP-binding</keyword>
<keyword id="KW-0963">Cytoplasm</keyword>
<keyword id="KW-0436">Ligase</keyword>
<keyword id="KW-0547">Nucleotide-binding</keyword>
<keyword id="KW-0648">Protein biosynthesis</keyword>